<gene>
    <name evidence="1" type="primary">rpl1</name>
    <name type="ordered locus">OE_2602R</name>
</gene>
<protein>
    <recommendedName>
        <fullName evidence="1">Large ribosomal subunit protein uL1</fullName>
    </recommendedName>
    <alternativeName>
        <fullName evidence="2">50S ribosomal protein L1</fullName>
    </alternativeName>
</protein>
<keyword id="KW-0678">Repressor</keyword>
<keyword id="KW-0687">Ribonucleoprotein</keyword>
<keyword id="KW-0689">Ribosomal protein</keyword>
<keyword id="KW-0694">RNA-binding</keyword>
<keyword id="KW-0699">rRNA-binding</keyword>
<keyword id="KW-0810">Translation regulation</keyword>
<keyword id="KW-0820">tRNA-binding</keyword>
<organism>
    <name type="scientific">Halobacterium salinarum (strain ATCC 29341 / DSM 671 / R1)</name>
    <dbReference type="NCBI Taxonomy" id="478009"/>
    <lineage>
        <taxon>Archaea</taxon>
        <taxon>Methanobacteriati</taxon>
        <taxon>Methanobacteriota</taxon>
        <taxon>Stenosarchaea group</taxon>
        <taxon>Halobacteria</taxon>
        <taxon>Halobacteriales</taxon>
        <taxon>Halobacteriaceae</taxon>
        <taxon>Halobacterium</taxon>
        <taxon>Halobacterium salinarum NRC-34001</taxon>
    </lineage>
</organism>
<evidence type="ECO:0000255" key="1">
    <source>
        <dbReference type="HAMAP-Rule" id="MF_01318"/>
    </source>
</evidence>
<evidence type="ECO:0000305" key="2"/>
<name>RL1_HALS3</name>
<sequence>MADNDIEEAVARALEDAPQRNFRETVDLAVNLRDLDLNDPSQRVDEGVVLPSGTGQETQIVVFADGETAVRADDVADDVLDEDDLSDLADDTDAAKDLADETDFFVAEAPMMQDIAGALGQVLGPRGKMPTPLQPDDDVVDTVNRMKNTVQIRSRDRRTFHTRVGAEDMSAEDIASNIDVIMRRLHANLEKGPLNVDSVYVKTTMGPAVEVA</sequence>
<accession>B0R4W2</accession>
<reference key="1">
    <citation type="journal article" date="2008" name="Genomics">
        <title>Evolution in the laboratory: the genome of Halobacterium salinarum strain R1 compared to that of strain NRC-1.</title>
        <authorList>
            <person name="Pfeiffer F."/>
            <person name="Schuster S.C."/>
            <person name="Broicher A."/>
            <person name="Falb M."/>
            <person name="Palm P."/>
            <person name="Rodewald K."/>
            <person name="Ruepp A."/>
            <person name="Soppa J."/>
            <person name="Tittor J."/>
            <person name="Oesterhelt D."/>
        </authorList>
    </citation>
    <scope>NUCLEOTIDE SEQUENCE [LARGE SCALE GENOMIC DNA]</scope>
    <source>
        <strain>ATCC 29341 / DSM 671 / R1</strain>
    </source>
</reference>
<comment type="function">
    <text evidence="1">Binds directly to 23S rRNA. Probably involved in E site tRNA release.</text>
</comment>
<comment type="function">
    <text evidence="1">Protein L1 is also a translational repressor protein, it controls the translation of its operon by binding to its mRNA.</text>
</comment>
<comment type="subunit">
    <text evidence="1">Part of the 50S ribosomal subunit.</text>
</comment>
<comment type="similarity">
    <text evidence="1">Belongs to the universal ribosomal protein uL1 family.</text>
</comment>
<proteinExistence type="inferred from homology"/>
<feature type="chain" id="PRO_1000141410" description="Large ribosomal subunit protein uL1">
    <location>
        <begin position="1"/>
        <end position="212"/>
    </location>
</feature>
<dbReference type="EMBL" id="AM774415">
    <property type="protein sequence ID" value="CAP13777.1"/>
    <property type="molecule type" value="Genomic_DNA"/>
</dbReference>
<dbReference type="RefSeq" id="WP_010902795.1">
    <property type="nucleotide sequence ID" value="NC_010364.1"/>
</dbReference>
<dbReference type="SMR" id="B0R4W2"/>
<dbReference type="EnsemblBacteria" id="CAP13777">
    <property type="protein sequence ID" value="CAP13777"/>
    <property type="gene ID" value="OE_2602R"/>
</dbReference>
<dbReference type="KEGG" id="hsl:OE_2602R"/>
<dbReference type="HOGENOM" id="CLU_062853_4_0_2"/>
<dbReference type="PhylomeDB" id="B0R4W2"/>
<dbReference type="Proteomes" id="UP000001321">
    <property type="component" value="Chromosome"/>
</dbReference>
<dbReference type="GO" id="GO:0015934">
    <property type="term" value="C:large ribosomal subunit"/>
    <property type="evidence" value="ECO:0007669"/>
    <property type="project" value="InterPro"/>
</dbReference>
<dbReference type="GO" id="GO:0019843">
    <property type="term" value="F:rRNA binding"/>
    <property type="evidence" value="ECO:0007669"/>
    <property type="project" value="UniProtKB-UniRule"/>
</dbReference>
<dbReference type="GO" id="GO:0003735">
    <property type="term" value="F:structural constituent of ribosome"/>
    <property type="evidence" value="ECO:0007669"/>
    <property type="project" value="InterPro"/>
</dbReference>
<dbReference type="GO" id="GO:0000049">
    <property type="term" value="F:tRNA binding"/>
    <property type="evidence" value="ECO:0007669"/>
    <property type="project" value="UniProtKB-KW"/>
</dbReference>
<dbReference type="GO" id="GO:0006417">
    <property type="term" value="P:regulation of translation"/>
    <property type="evidence" value="ECO:0007669"/>
    <property type="project" value="UniProtKB-KW"/>
</dbReference>
<dbReference type="GO" id="GO:0006412">
    <property type="term" value="P:translation"/>
    <property type="evidence" value="ECO:0007669"/>
    <property type="project" value="UniProtKB-UniRule"/>
</dbReference>
<dbReference type="CDD" id="cd00403">
    <property type="entry name" value="Ribosomal_L1"/>
    <property type="match status" value="1"/>
</dbReference>
<dbReference type="FunFam" id="3.40.50.790:FF:000005">
    <property type="entry name" value="50S ribosomal protein L1"/>
    <property type="match status" value="1"/>
</dbReference>
<dbReference type="Gene3D" id="3.30.190.20">
    <property type="match status" value="1"/>
</dbReference>
<dbReference type="Gene3D" id="3.40.50.790">
    <property type="match status" value="1"/>
</dbReference>
<dbReference type="HAMAP" id="MF_01318_A">
    <property type="entry name" value="Ribosomal_uL1_A"/>
    <property type="match status" value="1"/>
</dbReference>
<dbReference type="InterPro" id="IPR002143">
    <property type="entry name" value="Ribosomal_uL1"/>
</dbReference>
<dbReference type="InterPro" id="IPR023674">
    <property type="entry name" value="Ribosomal_uL1-like"/>
</dbReference>
<dbReference type="InterPro" id="IPR028364">
    <property type="entry name" value="Ribosomal_uL1/biogenesis"/>
</dbReference>
<dbReference type="InterPro" id="IPR016095">
    <property type="entry name" value="Ribosomal_uL1_3-a/b-sand"/>
</dbReference>
<dbReference type="InterPro" id="IPR023669">
    <property type="entry name" value="Ribosomal_uL1_arc"/>
</dbReference>
<dbReference type="InterPro" id="IPR023673">
    <property type="entry name" value="Ribosomal_uL1_CS"/>
</dbReference>
<dbReference type="NCBIfam" id="NF003244">
    <property type="entry name" value="PRK04203.1"/>
    <property type="match status" value="1"/>
</dbReference>
<dbReference type="PANTHER" id="PTHR36427">
    <property type="entry name" value="54S RIBOSOMAL PROTEIN L1, MITOCHONDRIAL"/>
    <property type="match status" value="1"/>
</dbReference>
<dbReference type="PANTHER" id="PTHR36427:SF3">
    <property type="entry name" value="LARGE RIBOSOMAL SUBUNIT PROTEIN UL1M"/>
    <property type="match status" value="1"/>
</dbReference>
<dbReference type="Pfam" id="PF00687">
    <property type="entry name" value="Ribosomal_L1"/>
    <property type="match status" value="1"/>
</dbReference>
<dbReference type="PIRSF" id="PIRSF002155">
    <property type="entry name" value="Ribosomal_L1"/>
    <property type="match status" value="1"/>
</dbReference>
<dbReference type="SUPFAM" id="SSF56808">
    <property type="entry name" value="Ribosomal protein L1"/>
    <property type="match status" value="1"/>
</dbReference>
<dbReference type="PROSITE" id="PS01199">
    <property type="entry name" value="RIBOSOMAL_L1"/>
    <property type="match status" value="1"/>
</dbReference>